<sequence>MELKDYYAIMGVKPTDDLKTIKTAYRRLARKYHPDVSKEPDAEAHFKEVAEAWEVLSDEQRRAEYDQMWQHRNDPQFNRQFHHSDGQSFNAEDFDDIFSSIFGQHARQSRQRPAARGHDIEIEVAVFLEETLTEHKRTISYNLPVYNAFGMIEQEIPKTLNVKIPAGVGNGQRIRLKGQGTPGENGGPNGDLWLVIHIAPHPLFDIVGQDLEIVVPVSPWEAALGAKVTVPTLKESILLTIPPGSQAGQRLRVKGKGLVSKKQTGDLYAVLKIVMPPKPDENTAALWQQLADAQSSFDPRKDWGKA</sequence>
<reference key="1">
    <citation type="journal article" date="2005" name="Nucleic Acids Res.">
        <title>Genome dynamics and diversity of Shigella species, the etiologic agents of bacillary dysentery.</title>
        <authorList>
            <person name="Yang F."/>
            <person name="Yang J."/>
            <person name="Zhang X."/>
            <person name="Chen L."/>
            <person name="Jiang Y."/>
            <person name="Yan Y."/>
            <person name="Tang X."/>
            <person name="Wang J."/>
            <person name="Xiong Z."/>
            <person name="Dong J."/>
            <person name="Xue Y."/>
            <person name="Zhu Y."/>
            <person name="Xu X."/>
            <person name="Sun L."/>
            <person name="Chen S."/>
            <person name="Nie H."/>
            <person name="Peng J."/>
            <person name="Xu J."/>
            <person name="Wang Y."/>
            <person name="Yuan Z."/>
            <person name="Wen Y."/>
            <person name="Yao Z."/>
            <person name="Shen Y."/>
            <person name="Qiang B."/>
            <person name="Hou Y."/>
            <person name="Yu J."/>
            <person name="Jin Q."/>
        </authorList>
    </citation>
    <scope>NUCLEOTIDE SEQUENCE [LARGE SCALE GENOMIC DNA]</scope>
    <source>
        <strain>Sd197</strain>
    </source>
</reference>
<evidence type="ECO:0000255" key="1">
    <source>
        <dbReference type="HAMAP-Rule" id="MF_01154"/>
    </source>
</evidence>
<keyword id="KW-0143">Chaperone</keyword>
<keyword id="KW-0963">Cytoplasm</keyword>
<keyword id="KW-0238">DNA-binding</keyword>
<keyword id="KW-1185">Reference proteome</keyword>
<gene>
    <name evidence="1" type="primary">cbpA</name>
    <name type="ordered locus">SDY_0974</name>
</gene>
<accession>Q32HR2</accession>
<comment type="function">
    <text evidence="1">DNA-binding protein that preferentially recognizes a curved DNA sequence. It is probably a functional analog of DnaJ; displays overlapping activities with DnaJ, but functions under different conditions, probably acting as a molecular chaperone in an adaptive response to environmental stresses other than heat shock. Lacks autonomous chaperone activity; binds native substrates and targets them for recognition by DnaK. Its activity is inhibited by the binding of CbpM.</text>
</comment>
<comment type="subcellular location">
    <subcellularLocation>
        <location evidence="1">Cytoplasm</location>
        <location evidence="1">Nucleoid</location>
    </subcellularLocation>
</comment>
<protein>
    <recommendedName>
        <fullName evidence="1">Curved DNA-binding protein</fullName>
    </recommendedName>
</protein>
<dbReference type="EMBL" id="CP000034">
    <property type="protein sequence ID" value="ABB61143.1"/>
    <property type="molecule type" value="Genomic_DNA"/>
</dbReference>
<dbReference type="RefSeq" id="WP_000420595.1">
    <property type="nucleotide sequence ID" value="NC_007606.1"/>
</dbReference>
<dbReference type="RefSeq" id="YP_402634.1">
    <property type="nucleotide sequence ID" value="NC_007606.1"/>
</dbReference>
<dbReference type="SMR" id="Q32HR2"/>
<dbReference type="STRING" id="300267.SDY_0974"/>
<dbReference type="EnsemblBacteria" id="ABB61143">
    <property type="protein sequence ID" value="ABB61143"/>
    <property type="gene ID" value="SDY_0974"/>
</dbReference>
<dbReference type="KEGG" id="sdy:SDY_0974"/>
<dbReference type="PATRIC" id="fig|300267.13.peg.1129"/>
<dbReference type="HOGENOM" id="CLU_017633_0_0_6"/>
<dbReference type="Proteomes" id="UP000002716">
    <property type="component" value="Chromosome"/>
</dbReference>
<dbReference type="GO" id="GO:0005737">
    <property type="term" value="C:cytoplasm"/>
    <property type="evidence" value="ECO:0007669"/>
    <property type="project" value="UniProtKB-UniRule"/>
</dbReference>
<dbReference type="GO" id="GO:0009295">
    <property type="term" value="C:nucleoid"/>
    <property type="evidence" value="ECO:0007669"/>
    <property type="project" value="UniProtKB-SubCell"/>
</dbReference>
<dbReference type="GO" id="GO:0003681">
    <property type="term" value="F:bent DNA binding"/>
    <property type="evidence" value="ECO:0007669"/>
    <property type="project" value="UniProtKB-UniRule"/>
</dbReference>
<dbReference type="GO" id="GO:0051082">
    <property type="term" value="F:unfolded protein binding"/>
    <property type="evidence" value="ECO:0007669"/>
    <property type="project" value="InterPro"/>
</dbReference>
<dbReference type="GO" id="GO:0051085">
    <property type="term" value="P:chaperone cofactor-dependent protein refolding"/>
    <property type="evidence" value="ECO:0007669"/>
    <property type="project" value="TreeGrafter"/>
</dbReference>
<dbReference type="GO" id="GO:0042026">
    <property type="term" value="P:protein refolding"/>
    <property type="evidence" value="ECO:0007669"/>
    <property type="project" value="TreeGrafter"/>
</dbReference>
<dbReference type="CDD" id="cd06257">
    <property type="entry name" value="DnaJ"/>
    <property type="match status" value="1"/>
</dbReference>
<dbReference type="CDD" id="cd10747">
    <property type="entry name" value="DnaJ_C"/>
    <property type="match status" value="1"/>
</dbReference>
<dbReference type="FunFam" id="1.10.287.110:FF:000013">
    <property type="entry name" value="Curved DNA-binding protein"/>
    <property type="match status" value="1"/>
</dbReference>
<dbReference type="FunFam" id="2.60.260.20:FF:000008">
    <property type="entry name" value="Curved DNA-binding protein"/>
    <property type="match status" value="1"/>
</dbReference>
<dbReference type="FunFam" id="2.60.260.20:FF:000010">
    <property type="entry name" value="Curved DNA-binding protein"/>
    <property type="match status" value="1"/>
</dbReference>
<dbReference type="Gene3D" id="1.10.287.110">
    <property type="entry name" value="DnaJ domain"/>
    <property type="match status" value="1"/>
</dbReference>
<dbReference type="Gene3D" id="1.20.5.460">
    <property type="entry name" value="Single helix bin"/>
    <property type="match status" value="1"/>
</dbReference>
<dbReference type="Gene3D" id="2.60.260.20">
    <property type="entry name" value="Urease metallochaperone UreE, N-terminal domain"/>
    <property type="match status" value="2"/>
</dbReference>
<dbReference type="HAMAP" id="MF_01154">
    <property type="entry name" value="CbpA"/>
    <property type="match status" value="1"/>
</dbReference>
<dbReference type="InterPro" id="IPR023859">
    <property type="entry name" value="DNA-bd_curved-DNA"/>
</dbReference>
<dbReference type="InterPro" id="IPR002939">
    <property type="entry name" value="DnaJ_C"/>
</dbReference>
<dbReference type="InterPro" id="IPR001623">
    <property type="entry name" value="DnaJ_domain"/>
</dbReference>
<dbReference type="InterPro" id="IPR018253">
    <property type="entry name" value="DnaJ_domain_CS"/>
</dbReference>
<dbReference type="InterPro" id="IPR008971">
    <property type="entry name" value="HSP40/DnaJ_pept-bd"/>
</dbReference>
<dbReference type="InterPro" id="IPR036869">
    <property type="entry name" value="J_dom_sf"/>
</dbReference>
<dbReference type="NCBIfam" id="NF007618">
    <property type="entry name" value="PRK10266.1"/>
    <property type="match status" value="1"/>
</dbReference>
<dbReference type="PANTHER" id="PTHR43096">
    <property type="entry name" value="DNAJ HOMOLOG 1, MITOCHONDRIAL-RELATED"/>
    <property type="match status" value="1"/>
</dbReference>
<dbReference type="PANTHER" id="PTHR43096:SF52">
    <property type="entry name" value="DNAJ HOMOLOG 1, MITOCHONDRIAL-RELATED"/>
    <property type="match status" value="1"/>
</dbReference>
<dbReference type="Pfam" id="PF00226">
    <property type="entry name" value="DnaJ"/>
    <property type="match status" value="1"/>
</dbReference>
<dbReference type="Pfam" id="PF01556">
    <property type="entry name" value="DnaJ_C"/>
    <property type="match status" value="1"/>
</dbReference>
<dbReference type="PRINTS" id="PR00625">
    <property type="entry name" value="JDOMAIN"/>
</dbReference>
<dbReference type="SMART" id="SM00271">
    <property type="entry name" value="DnaJ"/>
    <property type="match status" value="1"/>
</dbReference>
<dbReference type="SUPFAM" id="SSF46565">
    <property type="entry name" value="Chaperone J-domain"/>
    <property type="match status" value="1"/>
</dbReference>
<dbReference type="SUPFAM" id="SSF49493">
    <property type="entry name" value="HSP40/DnaJ peptide-binding domain"/>
    <property type="match status" value="2"/>
</dbReference>
<dbReference type="PROSITE" id="PS00636">
    <property type="entry name" value="DNAJ_1"/>
    <property type="match status" value="1"/>
</dbReference>
<dbReference type="PROSITE" id="PS50076">
    <property type="entry name" value="DNAJ_2"/>
    <property type="match status" value="1"/>
</dbReference>
<feature type="chain" id="PRO_0000286885" description="Curved DNA-binding protein">
    <location>
        <begin position="1"/>
        <end position="306"/>
    </location>
</feature>
<feature type="domain" description="J" evidence="1">
    <location>
        <begin position="5"/>
        <end position="69"/>
    </location>
</feature>
<organism>
    <name type="scientific">Shigella dysenteriae serotype 1 (strain Sd197)</name>
    <dbReference type="NCBI Taxonomy" id="300267"/>
    <lineage>
        <taxon>Bacteria</taxon>
        <taxon>Pseudomonadati</taxon>
        <taxon>Pseudomonadota</taxon>
        <taxon>Gammaproteobacteria</taxon>
        <taxon>Enterobacterales</taxon>
        <taxon>Enterobacteriaceae</taxon>
        <taxon>Shigella</taxon>
    </lineage>
</organism>
<name>CBPA_SHIDS</name>
<proteinExistence type="inferred from homology"/>